<comment type="function">
    <text evidence="1">F(1)F(0) ATP synthase produces ATP from ADP in the presence of a proton or sodium gradient. F-type ATPases consist of two structural domains, F(1) containing the extramembraneous catalytic core and F(0) containing the membrane proton channel, linked together by a central stalk and a peripheral stalk. During catalysis, ATP synthesis in the catalytic domain of F(1) is coupled via a rotary mechanism of the central stalk subunits to proton translocation.</text>
</comment>
<comment type="function">
    <text evidence="1">Component of the F(0) channel, it forms part of the peripheral stalk, linking F(1) to F(0).</text>
</comment>
<comment type="subunit">
    <text evidence="1">F-type ATPases have 2 components, F(1) - the catalytic core - and F(0) - the membrane proton channel. F(1) has five subunits: alpha(3), beta(3), gamma(1), delta(1), epsilon(1). F(0) has three main subunits: a(1), b(2) and c(10-14). The alpha and beta chains form an alternating ring which encloses part of the gamma chain. F(1) is attached to F(0) by a central stalk formed by the gamma and epsilon chains, while a peripheral stalk is formed by the delta and b chains.</text>
</comment>
<comment type="subcellular location">
    <subcellularLocation>
        <location evidence="1">Cell membrane</location>
        <topology evidence="1">Single-pass membrane protein</topology>
    </subcellularLocation>
</comment>
<comment type="similarity">
    <text evidence="1">Belongs to the ATPase B chain family.</text>
</comment>
<gene>
    <name evidence="1" type="primary">atpF</name>
    <name type="ordered locus">BU004</name>
</gene>
<evidence type="ECO:0000255" key="1">
    <source>
        <dbReference type="HAMAP-Rule" id="MF_01398"/>
    </source>
</evidence>
<accession>P57120</accession>
<sequence>MNLNATILGQAISFVLFVWFCMKYIWPPIILAIETRQKEIKESLTNAKKARDELYILEKKIHQNIIDAKQKASNILNSANKQKVSILEDARNQALEESKKIILNTQSEINIAITHARKNLHKEVVDLSISMAEKIIKKNISKDDNQELLDELVTSLSQVKN</sequence>
<proteinExistence type="inferred from homology"/>
<keyword id="KW-0066">ATP synthesis</keyword>
<keyword id="KW-1003">Cell membrane</keyword>
<keyword id="KW-0138">CF(0)</keyword>
<keyword id="KW-0375">Hydrogen ion transport</keyword>
<keyword id="KW-0406">Ion transport</keyword>
<keyword id="KW-0472">Membrane</keyword>
<keyword id="KW-1185">Reference proteome</keyword>
<keyword id="KW-0812">Transmembrane</keyword>
<keyword id="KW-1133">Transmembrane helix</keyword>
<keyword id="KW-0813">Transport</keyword>
<dbReference type="EMBL" id="BA000003">
    <property type="protein sequence ID" value="BAB12732.1"/>
    <property type="molecule type" value="Genomic_DNA"/>
</dbReference>
<dbReference type="RefSeq" id="NP_239846.1">
    <property type="nucleotide sequence ID" value="NC_002528.1"/>
</dbReference>
<dbReference type="RefSeq" id="WP_010895898.1">
    <property type="nucleotide sequence ID" value="NC_002528.1"/>
</dbReference>
<dbReference type="SMR" id="P57120"/>
<dbReference type="STRING" id="563178.BUAP5A_004"/>
<dbReference type="EnsemblBacteria" id="BAB12732">
    <property type="protein sequence ID" value="BAB12732"/>
    <property type="gene ID" value="BAB12732"/>
</dbReference>
<dbReference type="KEGG" id="buc:BU004"/>
<dbReference type="PATRIC" id="fig|107806.10.peg.17"/>
<dbReference type="eggNOG" id="COG0711">
    <property type="taxonomic scope" value="Bacteria"/>
</dbReference>
<dbReference type="HOGENOM" id="CLU_079215_4_5_6"/>
<dbReference type="Proteomes" id="UP000001806">
    <property type="component" value="Chromosome"/>
</dbReference>
<dbReference type="GO" id="GO:0005886">
    <property type="term" value="C:plasma membrane"/>
    <property type="evidence" value="ECO:0007669"/>
    <property type="project" value="UniProtKB-SubCell"/>
</dbReference>
<dbReference type="GO" id="GO:0045259">
    <property type="term" value="C:proton-transporting ATP synthase complex"/>
    <property type="evidence" value="ECO:0007669"/>
    <property type="project" value="UniProtKB-KW"/>
</dbReference>
<dbReference type="GO" id="GO:0046933">
    <property type="term" value="F:proton-transporting ATP synthase activity, rotational mechanism"/>
    <property type="evidence" value="ECO:0007669"/>
    <property type="project" value="UniProtKB-UniRule"/>
</dbReference>
<dbReference type="GO" id="GO:0046961">
    <property type="term" value="F:proton-transporting ATPase activity, rotational mechanism"/>
    <property type="evidence" value="ECO:0007669"/>
    <property type="project" value="TreeGrafter"/>
</dbReference>
<dbReference type="CDD" id="cd06503">
    <property type="entry name" value="ATP-synt_Fo_b"/>
    <property type="match status" value="1"/>
</dbReference>
<dbReference type="Gene3D" id="1.20.5.620">
    <property type="entry name" value="F1F0 ATP synthase subunit B, membrane domain"/>
    <property type="match status" value="1"/>
</dbReference>
<dbReference type="HAMAP" id="MF_01398">
    <property type="entry name" value="ATP_synth_b_bprime"/>
    <property type="match status" value="1"/>
</dbReference>
<dbReference type="InterPro" id="IPR028987">
    <property type="entry name" value="ATP_synth_B-like_membr_sf"/>
</dbReference>
<dbReference type="InterPro" id="IPR002146">
    <property type="entry name" value="ATP_synth_b/b'su_bac/chlpt"/>
</dbReference>
<dbReference type="InterPro" id="IPR005864">
    <property type="entry name" value="ATP_synth_F0_bsu_bac"/>
</dbReference>
<dbReference type="InterPro" id="IPR050059">
    <property type="entry name" value="ATP_synthase_B_chain"/>
</dbReference>
<dbReference type="NCBIfam" id="TIGR01144">
    <property type="entry name" value="ATP_synt_b"/>
    <property type="match status" value="1"/>
</dbReference>
<dbReference type="NCBIfam" id="NF004411">
    <property type="entry name" value="PRK05759.1-2"/>
    <property type="match status" value="1"/>
</dbReference>
<dbReference type="PANTHER" id="PTHR33445:SF1">
    <property type="entry name" value="ATP SYNTHASE SUBUNIT B"/>
    <property type="match status" value="1"/>
</dbReference>
<dbReference type="PANTHER" id="PTHR33445">
    <property type="entry name" value="ATP SYNTHASE SUBUNIT B', CHLOROPLASTIC"/>
    <property type="match status" value="1"/>
</dbReference>
<dbReference type="Pfam" id="PF00430">
    <property type="entry name" value="ATP-synt_B"/>
    <property type="match status" value="1"/>
</dbReference>
<dbReference type="SUPFAM" id="SSF81573">
    <property type="entry name" value="F1F0 ATP synthase subunit B, membrane domain"/>
    <property type="match status" value="1"/>
</dbReference>
<protein>
    <recommendedName>
        <fullName evidence="1">ATP synthase subunit b</fullName>
    </recommendedName>
    <alternativeName>
        <fullName evidence="1">ATP synthase F(0) sector subunit b</fullName>
    </alternativeName>
    <alternativeName>
        <fullName evidence="1">ATPase subunit I</fullName>
    </alternativeName>
    <alternativeName>
        <fullName evidence="1">F-type ATPase subunit b</fullName>
        <shortName evidence="1">F-ATPase subunit b</shortName>
    </alternativeName>
</protein>
<reference key="1">
    <citation type="journal article" date="2000" name="Nature">
        <title>Genome sequence of the endocellular bacterial symbiont of aphids Buchnera sp. APS.</title>
        <authorList>
            <person name="Shigenobu S."/>
            <person name="Watanabe H."/>
            <person name="Hattori M."/>
            <person name="Sakaki Y."/>
            <person name="Ishikawa H."/>
        </authorList>
    </citation>
    <scope>NUCLEOTIDE SEQUENCE [LARGE SCALE GENOMIC DNA]</scope>
    <source>
        <strain>APS</strain>
    </source>
</reference>
<feature type="chain" id="PRO_0000082367" description="ATP synthase subunit b">
    <location>
        <begin position="1"/>
        <end position="161"/>
    </location>
</feature>
<feature type="transmembrane region" description="Helical" evidence="1">
    <location>
        <begin position="11"/>
        <end position="31"/>
    </location>
</feature>
<organism>
    <name type="scientific">Buchnera aphidicola subsp. Acyrthosiphon pisum (strain APS)</name>
    <name type="common">Acyrthosiphon pisum symbiotic bacterium</name>
    <dbReference type="NCBI Taxonomy" id="107806"/>
    <lineage>
        <taxon>Bacteria</taxon>
        <taxon>Pseudomonadati</taxon>
        <taxon>Pseudomonadota</taxon>
        <taxon>Gammaproteobacteria</taxon>
        <taxon>Enterobacterales</taxon>
        <taxon>Erwiniaceae</taxon>
        <taxon>Buchnera</taxon>
    </lineage>
</organism>
<name>ATPF_BUCAI</name>